<keyword id="KW-0997">Cell inner membrane</keyword>
<keyword id="KW-1003">Cell membrane</keyword>
<keyword id="KW-0472">Membrane</keyword>
<keyword id="KW-0653">Protein transport</keyword>
<keyword id="KW-1185">Reference proteome</keyword>
<keyword id="KW-0811">Translocation</keyword>
<keyword id="KW-0812">Transmembrane</keyword>
<keyword id="KW-1133">Transmembrane helix</keyword>
<keyword id="KW-0813">Transport</keyword>
<proteinExistence type="inferred from homology"/>
<organism>
    <name type="scientific">Rhizobium leguminosarum bv. trifolii (strain WSM2304)</name>
    <dbReference type="NCBI Taxonomy" id="395492"/>
    <lineage>
        <taxon>Bacteria</taxon>
        <taxon>Pseudomonadati</taxon>
        <taxon>Pseudomonadota</taxon>
        <taxon>Alphaproteobacteria</taxon>
        <taxon>Hyphomicrobiales</taxon>
        <taxon>Rhizobiaceae</taxon>
        <taxon>Rhizobium/Agrobacterium group</taxon>
        <taxon>Rhizobium</taxon>
    </lineage>
</organism>
<evidence type="ECO:0000255" key="1">
    <source>
        <dbReference type="HAMAP-Rule" id="MF_00236"/>
    </source>
</evidence>
<evidence type="ECO:0000256" key="2">
    <source>
        <dbReference type="SAM" id="MobiDB-lite"/>
    </source>
</evidence>
<protein>
    <recommendedName>
        <fullName evidence="1">Sec-independent protein translocase protein TatA</fullName>
    </recommendedName>
</protein>
<comment type="function">
    <text evidence="1">Part of the twin-arginine translocation (Tat) system that transports large folded proteins containing a characteristic twin-arginine motif in their signal peptide across membranes. TatA could form the protein-conducting channel of the Tat system.</text>
</comment>
<comment type="subunit">
    <text evidence="1">The Tat system comprises two distinct complexes: a TatABC complex, containing multiple copies of TatA, TatB and TatC subunits, and a separate TatA complex, containing only TatA subunits. Substrates initially bind to the TatABC complex, which probably triggers association of the separate TatA complex to form the active translocon.</text>
</comment>
<comment type="subcellular location">
    <subcellularLocation>
        <location evidence="1">Cell inner membrane</location>
        <topology evidence="1">Single-pass membrane protein</topology>
    </subcellularLocation>
</comment>
<comment type="similarity">
    <text evidence="1">Belongs to the TatA/E family.</text>
</comment>
<gene>
    <name evidence="1" type="primary">tatA</name>
    <name type="ordered locus">Rleg2_1487</name>
</gene>
<dbReference type="EMBL" id="CP001191">
    <property type="protein sequence ID" value="ACI54779.1"/>
    <property type="molecule type" value="Genomic_DNA"/>
</dbReference>
<dbReference type="RefSeq" id="WP_003538990.1">
    <property type="nucleotide sequence ID" value="NC_011369.1"/>
</dbReference>
<dbReference type="SMR" id="B5ZMF7"/>
<dbReference type="STRING" id="395492.Rleg2_1487"/>
<dbReference type="KEGG" id="rlt:Rleg2_1487"/>
<dbReference type="eggNOG" id="COG1826">
    <property type="taxonomic scope" value="Bacteria"/>
</dbReference>
<dbReference type="HOGENOM" id="CLU_086034_5_0_5"/>
<dbReference type="Proteomes" id="UP000008330">
    <property type="component" value="Chromosome"/>
</dbReference>
<dbReference type="GO" id="GO:0033281">
    <property type="term" value="C:TAT protein transport complex"/>
    <property type="evidence" value="ECO:0007669"/>
    <property type="project" value="UniProtKB-UniRule"/>
</dbReference>
<dbReference type="GO" id="GO:0008320">
    <property type="term" value="F:protein transmembrane transporter activity"/>
    <property type="evidence" value="ECO:0007669"/>
    <property type="project" value="UniProtKB-UniRule"/>
</dbReference>
<dbReference type="GO" id="GO:0043953">
    <property type="term" value="P:protein transport by the Tat complex"/>
    <property type="evidence" value="ECO:0007669"/>
    <property type="project" value="UniProtKB-UniRule"/>
</dbReference>
<dbReference type="Gene3D" id="1.20.5.3310">
    <property type="match status" value="1"/>
</dbReference>
<dbReference type="HAMAP" id="MF_00236">
    <property type="entry name" value="TatA_E"/>
    <property type="match status" value="1"/>
</dbReference>
<dbReference type="InterPro" id="IPR003369">
    <property type="entry name" value="TatA/B/E"/>
</dbReference>
<dbReference type="InterPro" id="IPR006312">
    <property type="entry name" value="TatA/E"/>
</dbReference>
<dbReference type="NCBIfam" id="NF001940">
    <property type="entry name" value="PRK00720.1"/>
    <property type="match status" value="1"/>
</dbReference>
<dbReference type="NCBIfam" id="TIGR01411">
    <property type="entry name" value="tatAE"/>
    <property type="match status" value="1"/>
</dbReference>
<dbReference type="PANTHER" id="PTHR42982">
    <property type="entry name" value="SEC-INDEPENDENT PROTEIN TRANSLOCASE PROTEIN TATA"/>
    <property type="match status" value="1"/>
</dbReference>
<dbReference type="PANTHER" id="PTHR42982:SF1">
    <property type="entry name" value="SEC-INDEPENDENT PROTEIN TRANSLOCASE PROTEIN TATA"/>
    <property type="match status" value="1"/>
</dbReference>
<dbReference type="Pfam" id="PF02416">
    <property type="entry name" value="TatA_B_E"/>
    <property type="match status" value="1"/>
</dbReference>
<name>TATA_RHILW</name>
<accession>B5ZMF7</accession>
<feature type="chain" id="PRO_1000197900" description="Sec-independent protein translocase protein TatA">
    <location>
        <begin position="1"/>
        <end position="63"/>
    </location>
</feature>
<feature type="transmembrane region" description="Helical" evidence="1">
    <location>
        <begin position="1"/>
        <end position="21"/>
    </location>
</feature>
<feature type="region of interest" description="Disordered" evidence="2">
    <location>
        <begin position="42"/>
        <end position="63"/>
    </location>
</feature>
<feature type="compositionally biased region" description="Basic and acidic residues" evidence="2">
    <location>
        <begin position="53"/>
        <end position="63"/>
    </location>
</feature>
<sequence>MGSFSMWHWLIVLVIVLLLFGRGKIPELMGDVAKGIKSFKKGMTDEDAPDTAKTVDHKADETK</sequence>
<reference key="1">
    <citation type="journal article" date="2010" name="Stand. Genomic Sci.">
        <title>Complete genome sequence of Rhizobium leguminosarum bv trifolii strain WSM2304, an effective microsymbiont of the South American clover Trifolium polymorphum.</title>
        <authorList>
            <person name="Reeve W."/>
            <person name="O'Hara G."/>
            <person name="Chain P."/>
            <person name="Ardley J."/>
            <person name="Brau L."/>
            <person name="Nandesena K."/>
            <person name="Tiwari R."/>
            <person name="Malfatti S."/>
            <person name="Kiss H."/>
            <person name="Lapidus A."/>
            <person name="Copeland A."/>
            <person name="Nolan M."/>
            <person name="Land M."/>
            <person name="Ivanova N."/>
            <person name="Mavromatis K."/>
            <person name="Markowitz V."/>
            <person name="Kyrpides N."/>
            <person name="Melino V."/>
            <person name="Denton M."/>
            <person name="Yates R."/>
            <person name="Howieson J."/>
        </authorList>
    </citation>
    <scope>NUCLEOTIDE SEQUENCE [LARGE SCALE GENOMIC DNA]</scope>
    <source>
        <strain>WSM2304</strain>
    </source>
</reference>